<feature type="signal peptide" evidence="2">
    <location>
        <begin position="1"/>
        <end position="33"/>
    </location>
</feature>
<feature type="propeptide" id="PRO_0000026841" evidence="2">
    <location>
        <begin position="34"/>
        <end position="76"/>
    </location>
</feature>
<feature type="chain" id="PRO_0000026842" description="Zinc metalloprotease ZmpB">
    <location>
        <begin position="77"/>
        <end position="1906"/>
    </location>
</feature>
<feature type="transmembrane region" description="Helical" evidence="2">
    <location>
        <begin position="77"/>
        <end position="98"/>
    </location>
</feature>
<feature type="transmembrane region" description="Helical" evidence="2">
    <location>
        <begin position="105"/>
        <end position="127"/>
    </location>
</feature>
<feature type="topological domain" description="Extracellular" evidence="2">
    <location>
        <begin position="128"/>
        <end position="1906"/>
    </location>
</feature>
<feature type="repeat" description="1-1">
    <location>
        <begin position="277"/>
        <end position="291"/>
    </location>
</feature>
<feature type="repeat" description="2-1">
    <location>
        <begin position="293"/>
        <end position="315"/>
    </location>
</feature>
<feature type="repeat" description="1-2">
    <location>
        <begin position="361"/>
        <end position="375"/>
    </location>
</feature>
<feature type="repeat" description="2-2">
    <location>
        <begin position="380"/>
        <end position="402"/>
    </location>
</feature>
<feature type="region of interest" description="Disordered" evidence="4">
    <location>
        <begin position="178"/>
        <end position="436"/>
    </location>
</feature>
<feature type="region of interest" description="2 X 15 AA repeats of K-V-E-Q-A-G-E-P-V-A-P-R-E-D-E">
    <location>
        <begin position="277"/>
        <end position="375"/>
    </location>
</feature>
<feature type="region of interest" description="2 X 23 AA approximate repeats">
    <location>
        <begin position="293"/>
        <end position="375"/>
    </location>
</feature>
<feature type="short sequence motif" description="LPXTG sorting signal" evidence="3">
    <location>
        <begin position="73"/>
        <end position="77"/>
    </location>
</feature>
<feature type="compositionally biased region" description="Polar residues" evidence="4">
    <location>
        <begin position="181"/>
        <end position="196"/>
    </location>
</feature>
<feature type="compositionally biased region" description="Basic and acidic residues" evidence="4">
    <location>
        <begin position="201"/>
        <end position="239"/>
    </location>
</feature>
<feature type="compositionally biased region" description="Basic and acidic residues" evidence="4">
    <location>
        <begin position="252"/>
        <end position="262"/>
    </location>
</feature>
<feature type="compositionally biased region" description="Basic and acidic residues" evidence="4">
    <location>
        <begin position="271"/>
        <end position="335"/>
    </location>
</feature>
<feature type="compositionally biased region" description="Basic and acidic residues" evidence="4">
    <location>
        <begin position="352"/>
        <end position="375"/>
    </location>
</feature>
<feature type="compositionally biased region" description="Basic and acidic residues" evidence="4">
    <location>
        <begin position="383"/>
        <end position="408"/>
    </location>
</feature>
<feature type="compositionally biased region" description="Polar residues" evidence="4">
    <location>
        <begin position="421"/>
        <end position="436"/>
    </location>
</feature>
<feature type="active site" evidence="1">
    <location>
        <position position="1563"/>
    </location>
</feature>
<feature type="binding site" evidence="1">
    <location>
        <position position="1562"/>
    </location>
    <ligand>
        <name>Zn(2+)</name>
        <dbReference type="ChEBI" id="CHEBI:29105"/>
    </ligand>
</feature>
<feature type="binding site" evidence="1">
    <location>
        <position position="1566"/>
    </location>
    <ligand>
        <name>Zn(2+)</name>
        <dbReference type="ChEBI" id="CHEBI:29105"/>
    </ligand>
</feature>
<feature type="binding site" evidence="1">
    <location>
        <position position="1586"/>
    </location>
    <ligand>
        <name>Zn(2+)</name>
        <dbReference type="ChEBI" id="CHEBI:29105"/>
    </ligand>
</feature>
<feature type="modified residue" description="Pentaglycyl murein peptidoglycan amidated threonine" evidence="3">
    <location>
        <position position="76"/>
    </location>
</feature>
<gene>
    <name type="primary">zmpB</name>
    <name type="ordered locus">SP_0664</name>
</gene>
<proteinExistence type="inferred from homology"/>
<organism>
    <name type="scientific">Streptococcus pneumoniae serotype 4 (strain ATCC BAA-334 / TIGR4)</name>
    <dbReference type="NCBI Taxonomy" id="170187"/>
    <lineage>
        <taxon>Bacteria</taxon>
        <taxon>Bacillati</taxon>
        <taxon>Bacillota</taxon>
        <taxon>Bacilli</taxon>
        <taxon>Lactobacillales</taxon>
        <taxon>Streptococcaceae</taxon>
        <taxon>Streptococcus</taxon>
    </lineage>
</organism>
<keyword id="KW-0134">Cell wall</keyword>
<keyword id="KW-0378">Hydrolase</keyword>
<keyword id="KW-0472">Membrane</keyword>
<keyword id="KW-0479">Metal-binding</keyword>
<keyword id="KW-0482">Metalloprotease</keyword>
<keyword id="KW-0572">Peptidoglycan-anchor</keyword>
<keyword id="KW-0645">Protease</keyword>
<keyword id="KW-1185">Reference proteome</keyword>
<keyword id="KW-0677">Repeat</keyword>
<keyword id="KW-0964">Secreted</keyword>
<keyword id="KW-0732">Signal</keyword>
<keyword id="KW-0812">Transmembrane</keyword>
<keyword id="KW-1133">Transmembrane helix</keyword>
<keyword id="KW-0843">Virulence</keyword>
<keyword id="KW-0862">Zinc</keyword>
<name>ZMPB_STRPN</name>
<sequence>MFKKDRFSIRKIKGVVGSVFLGSLLMAPSVVDAATYHYVNKEIISQEAKDLIQTGKPDRNEVVYGLVYQKDQLPQTGTEASVLTAFGLLTVGSLLLIYKRKKIASVFLVGAMGLVVLPSAGAVDPVATLALASREGVVEMEGYRYVGYLSGDILKTLGLDTVLEETSAKPGEVTVVEVETPQSITNQEQARTENQVVETEEAPKEEAPKTEESPKEEPKSEVKPTDDTLPKVEEGKEDSAEPAPVEEVGGEVESKPEEKVAVKPESQPSDKPAEESKVEQAGEPVAPREDEKAPVEPEKQPEAPEEEKAVEETPKQEESTPDTKAEETVEPKEETVNQSIEQPKVETPAVEKQTEPTEEPKVEQAGEPVAPREDEQAPTAPVEPEKQPEVPEEEKAVEETPKPEDKIKGIGTKEPVDKSELNNQIDKASSVSPTDYSTASYNALGPVLETAKGVYASEPVKQPEVNSETNKLKTAIDALNVDKTELNNTIADAKTKVKEHYSDRSWQNLQTEVTKAEKVAANTDAKQSEVNEAVEKLTATIEKLVELSEKPILTLTSTDKKILEREAVAKYTLENQNKTKIKSITAELKKGEEVINTVVLTDDKVTTETISAAFKNLEYYKEYTLSTTMIYDRGNGEETETLENQNIQLDLKKVELKNIKRTDLIKYENGKETNESLITTIPDDKSNYYLKITSNNQKTTLLAVKNIEETTVNGTPVYKVTAIADNLVSRTADNKFEEEYVHYIEKPKVHEDNVYYNFKELVEAIQNDPSKEYRLGQSMSARNVVPNGKSYITKEFTGKLLSSEGKQFAITELEHPLFNVITNATINNVNFENVEIERSGQDNIASLANTMKGSSVITNVKITGTLSGRNNVAGFVNNMNDGTRIENVAFFGKLHSTSGNGSHTGGIAGTNYRGIVRKAYVDATITGNKTRASLLVPKVDYGLTLDHLIGTKALLTESVVKGKIDVSNPVEVGAIASKTWPVGTVSNSVSYAKIIRGEELFGSNDVDDSDYASAHIKDLYAVEGYSSGNRSFRKSKTFTKLTKEQADAKVTTFNITADKLESDLSPLAKLNEEKAYSSIQDYNAEYNQAYKNLEKLIPFYNKDYIVYQGNKLNKEHHLNTKEVLSVTAMNNNEFITNLDEANKIIVHYADGTKDYFNLSSSSEGLSNVKEYTITDLGIKYTPNIVQKDNTTLVNDIKSILESVELQSQTMYQHLNRLGDYRVNAIKDLYLEESFTDVKENLTNLITKLVQNEEHQLNDSPAARQMIRDKVEKNKAALLLGLTYLNRYYGVKFGDVNIKELMLFKPDFYGEKVSVLDRLIEIGSKENNIKGSRTFDAFGQVLAKYTKSGNLDAFLNYNRQLFTNIDNMNDWFIDATEDHVYIAERASEVEEIKNSKHRAFDNLKRSHLRNTILPLLNIDKAHLYLISNYNAIAFGSAERLGKKSLEDIKDIVNKAADGYRNYYDFWYRLASDNVKQRLLRDAVIPIWEGYNAPGGWVEKYGRYNTDKVYTPLREFFGPMDKYYNYNGTGAYAAIYPNSDDIRTDVKYVHLEMVGEYGISVYTHETTHVNDRAIYLGGFGHREGTDAEAYAQGMLQTPVTGSGFDEFGSLGINMVFKRKNDGNQWYITDPKTLKTREDINRYMKGYNDTLTLLDEIEAESVISQQNKDLNSAWFKKIDREYRDNNKLNQWDKIRNLSQEEKNELNIQSVNDLVDQQLMTNRNPGNGIYKPEAISYNDQSPYVGVRMMTGIYGGNTSKGAPGAVSFKHNAFRLWGYYGYENGFLGYASNKYKQQSKTDGESVLSDEYIIKKISNNTFNTIEEFKKAYFKEVKDKATKGLTTFEVNGSSVSSYDDLLTLFKEAVKKDAETLKQEANGNKTVSMNNTVKLKEAVYKKLLQQTNSFKTSIFK</sequence>
<accession>Q9L7Q2</accession>
<accession>Q7D4C2</accession>
<comment type="function">
    <text evidence="5 6">Is a virulence factor capable of inducing inflammation in the lower respiratory tract, by increasing tumor necrosis factor alpha (TNF-alpha) concentration in the lungs. Also appears to have other functions important in virulence in models of pneumonia and septicemia.</text>
</comment>
<comment type="cofactor">
    <cofactor evidence="1">
        <name>Zn(2+)</name>
        <dbReference type="ChEBI" id="CHEBI:29105"/>
    </cofactor>
    <text evidence="1">Binds 1 zinc ion per subunit.</text>
</comment>
<comment type="subcellular location">
    <subcellularLocation>
        <location>Secreted</location>
        <location>Cell wall</location>
    </subcellularLocation>
    <subcellularLocation>
        <location>Membrane</location>
        <topology>Multi-pass membrane protein</topology>
    </subcellularLocation>
    <subcellularLocation>
        <location>Secreted</location>
        <location>Cell wall</location>
        <topology>Peptidoglycan-anchor</topology>
    </subcellularLocation>
</comment>
<comment type="PTM">
    <text>The Gram-positive cell-wall anchor motif LPXTG is located in the N-terminal part, in contrast to such motifs in other known streptococcal and staphylococcal proteins. The protease could be cleaved by the sortase and anchored in the membrane via the two potential N-terminal transmembrane domains, whereas the propeptide located prior to the LPXTG motif would remain attached to the cell wall peptidoglycan by an amide bond.</text>
</comment>
<comment type="similarity">
    <text evidence="7">Belongs to the peptidase M26 family.</text>
</comment>
<comment type="caution">
    <text evidence="8">Was originally (PubMed:10792723) thought to control translocation of choline-binding proteins to the cell surface but PubMed:11260480 failed to confirm this observation. The conflicting observations could be explained by the fact that the mutant strain used in PubMed:10792723 lacked capsule.</text>
</comment>
<comment type="sequence caution" evidence="7">
    <conflict type="erroneous initiation">
        <sequence resource="EMBL-CDS" id="AAF31454"/>
    </conflict>
</comment>
<comment type="sequence caution" evidence="7">
    <conflict type="erroneous initiation">
        <sequence resource="EMBL-CDS" id="AAK74809"/>
    </conflict>
</comment>
<evidence type="ECO:0000250" key="1"/>
<evidence type="ECO:0000255" key="2"/>
<evidence type="ECO:0000255" key="3">
    <source>
        <dbReference type="PROSITE-ProRule" id="PRU00477"/>
    </source>
</evidence>
<evidence type="ECO:0000256" key="4">
    <source>
        <dbReference type="SAM" id="MobiDB-lite"/>
    </source>
</evidence>
<evidence type="ECO:0000269" key="5">
    <source>
    </source>
</evidence>
<evidence type="ECO:0000269" key="6">
    <source>
    </source>
</evidence>
<evidence type="ECO:0000305" key="7"/>
<evidence type="ECO:0000305" key="8">
    <source>
    </source>
</evidence>
<dbReference type="EC" id="3.4.24.-"/>
<dbReference type="EMBL" id="AF221126">
    <property type="protein sequence ID" value="AAF31454.1"/>
    <property type="status" value="ALT_INIT"/>
    <property type="molecule type" value="Genomic_DNA"/>
</dbReference>
<dbReference type="EMBL" id="AE005672">
    <property type="protein sequence ID" value="AAK74809.1"/>
    <property type="status" value="ALT_INIT"/>
    <property type="molecule type" value="Genomic_DNA"/>
</dbReference>
<dbReference type="PIR" id="H95076">
    <property type="entry name" value="H95076"/>
</dbReference>
<dbReference type="RefSeq" id="WP_000472995.1">
    <property type="nucleotide sequence ID" value="NC_003028.3"/>
</dbReference>
<dbReference type="SMR" id="Q9L7Q2"/>
<dbReference type="MEROPS" id="M26.002"/>
<dbReference type="PaxDb" id="170187-SP_0664"/>
<dbReference type="EnsemblBacteria" id="AAK74809">
    <property type="protein sequence ID" value="AAK74809"/>
    <property type="gene ID" value="SP_0664"/>
</dbReference>
<dbReference type="KEGG" id="spn:SP_0664"/>
<dbReference type="eggNOG" id="COG3064">
    <property type="taxonomic scope" value="Bacteria"/>
</dbReference>
<dbReference type="PhylomeDB" id="Q9L7Q2"/>
<dbReference type="BioCyc" id="SPNE170187:G1FZB-687-MONOMER"/>
<dbReference type="Proteomes" id="UP000000585">
    <property type="component" value="Chromosome"/>
</dbReference>
<dbReference type="GO" id="GO:0009986">
    <property type="term" value="C:cell surface"/>
    <property type="evidence" value="ECO:0000314"/>
    <property type="project" value="CACAO"/>
</dbReference>
<dbReference type="GO" id="GO:0005576">
    <property type="term" value="C:extracellular region"/>
    <property type="evidence" value="ECO:0007669"/>
    <property type="project" value="UniProtKB-KW"/>
</dbReference>
<dbReference type="GO" id="GO:0016020">
    <property type="term" value="C:membrane"/>
    <property type="evidence" value="ECO:0007669"/>
    <property type="project" value="UniProtKB-SubCell"/>
</dbReference>
<dbReference type="GO" id="GO:0004222">
    <property type="term" value="F:metalloendopeptidase activity"/>
    <property type="evidence" value="ECO:0007669"/>
    <property type="project" value="InterPro"/>
</dbReference>
<dbReference type="GO" id="GO:0008270">
    <property type="term" value="F:zinc ion binding"/>
    <property type="evidence" value="ECO:0007669"/>
    <property type="project" value="InterPro"/>
</dbReference>
<dbReference type="GO" id="GO:0006508">
    <property type="term" value="P:proteolysis"/>
    <property type="evidence" value="ECO:0007669"/>
    <property type="project" value="UniProtKB-KW"/>
</dbReference>
<dbReference type="FunFam" id="1.20.1270.90:FF:000002">
    <property type="entry name" value="Zinc metalloprotease ZmpB"/>
    <property type="match status" value="1"/>
</dbReference>
<dbReference type="Gene3D" id="1.20.1270.90">
    <property type="entry name" value="AF1782-like"/>
    <property type="match status" value="2"/>
</dbReference>
<dbReference type="InterPro" id="IPR019931">
    <property type="entry name" value="LPXTG_anchor"/>
</dbReference>
<dbReference type="InterPro" id="IPR011505">
    <property type="entry name" value="Peptidase_M26_C_dom"/>
</dbReference>
<dbReference type="InterPro" id="IPR008006">
    <property type="entry name" value="Peptidase_M26_N_dom"/>
</dbReference>
<dbReference type="InterPro" id="IPR053094">
    <property type="entry name" value="Zinc_metalloprotease_ZmpB"/>
</dbReference>
<dbReference type="NCBIfam" id="TIGR01167">
    <property type="entry name" value="LPXTG_anchor"/>
    <property type="match status" value="1"/>
</dbReference>
<dbReference type="PANTHER" id="PTHR48193:SF2">
    <property type="entry name" value="ZINC METALLOPROTEASE ZMPB"/>
    <property type="match status" value="1"/>
</dbReference>
<dbReference type="PANTHER" id="PTHR48193">
    <property type="entry name" value="ZINC METALLOPROTEASE ZMPB-RELATED"/>
    <property type="match status" value="1"/>
</dbReference>
<dbReference type="Pfam" id="PF07554">
    <property type="entry name" value="FIVAR"/>
    <property type="match status" value="2"/>
</dbReference>
<dbReference type="Pfam" id="PF00746">
    <property type="entry name" value="Gram_pos_anchor"/>
    <property type="match status" value="1"/>
</dbReference>
<dbReference type="Pfam" id="PF07580">
    <property type="entry name" value="Peptidase_M26_C"/>
    <property type="match status" value="1"/>
</dbReference>
<dbReference type="Pfam" id="PF05342">
    <property type="entry name" value="Peptidase_M26_N"/>
    <property type="match status" value="1"/>
</dbReference>
<dbReference type="PROSITE" id="PS50847">
    <property type="entry name" value="GRAM_POS_ANCHORING"/>
    <property type="match status" value="1"/>
</dbReference>
<protein>
    <recommendedName>
        <fullName>Zinc metalloprotease ZmpB</fullName>
        <ecNumber>3.4.24.-</ecNumber>
    </recommendedName>
</protein>
<reference key="1">
    <citation type="journal article" date="2000" name="Mol. Microbiol.">
        <title>Extracellular targeting of choline-binding proteins in Streptococcus pneumoniae by a zinc metalloprotease.</title>
        <authorList>
            <person name="Novak R."/>
            <person name="Charpentier E."/>
            <person name="Braun J.S."/>
            <person name="Park E."/>
            <person name="Murti S."/>
            <person name="Tuomanen E."/>
            <person name="Masure R."/>
        </authorList>
    </citation>
    <scope>NUCLEOTIDE SEQUENCE [GENOMIC DNA]</scope>
    <scope>CELL SURFACE LOCALIZATION</scope>
    <source>
        <strain>Serotype 4</strain>
    </source>
</reference>
<reference key="2">
    <citation type="journal article" date="2001" name="Science">
        <title>Complete genome sequence of a virulent isolate of Streptococcus pneumoniae.</title>
        <authorList>
            <person name="Tettelin H."/>
            <person name="Nelson K.E."/>
            <person name="Paulsen I.T."/>
            <person name="Eisen J.A."/>
            <person name="Read T.D."/>
            <person name="Peterson S.N."/>
            <person name="Heidelberg J.F."/>
            <person name="DeBoy R.T."/>
            <person name="Haft D.H."/>
            <person name="Dodson R.J."/>
            <person name="Durkin A.S."/>
            <person name="Gwinn M.L."/>
            <person name="Kolonay J.F."/>
            <person name="Nelson W.C."/>
            <person name="Peterson J.D."/>
            <person name="Umayam L.A."/>
            <person name="White O."/>
            <person name="Salzberg S.L."/>
            <person name="Lewis M.R."/>
            <person name="Radune D."/>
            <person name="Holtzapple E.K."/>
            <person name="Khouri H.M."/>
            <person name="Wolf A.M."/>
            <person name="Utterback T.R."/>
            <person name="Hansen C.L."/>
            <person name="McDonald L.A."/>
            <person name="Feldblyum T.V."/>
            <person name="Angiuoli S.V."/>
            <person name="Dickinson T."/>
            <person name="Hickey E.K."/>
            <person name="Holt I.E."/>
            <person name="Loftus B.J."/>
            <person name="Yang F."/>
            <person name="Smith H.O."/>
            <person name="Venter J.C."/>
            <person name="Dougherty B.A."/>
            <person name="Morrison D.A."/>
            <person name="Hollingshead S.K."/>
            <person name="Fraser C.M."/>
        </authorList>
    </citation>
    <scope>NUCLEOTIDE SEQUENCE [LARGE SCALE GENOMIC DNA]</scope>
    <source>
        <strain>ATCC BAA-334 / TIGR4</strain>
    </source>
</reference>
<reference key="3">
    <citation type="journal article" date="2001" name="Mol. Microbiol.">
        <title>The puzzle of zmpB and extensive chain formation, autolysis defect and non-translocation of choline-binding proteins in Streptococcus pneumoniae.</title>
        <authorList>
            <person name="Berge M."/>
            <person name="Garcia P."/>
            <person name="Iannelli F."/>
            <person name="Prere M.F."/>
            <person name="Granadel C."/>
            <person name="Polissi A."/>
            <person name="Claverys J.-P."/>
        </authorList>
    </citation>
    <scope>DISCUSSION OF FUNCTION</scope>
</reference>
<reference key="4">
    <citation type="journal article" date="2003" name="BMC Microbiol.">
        <title>The three extra-cellular zinc metalloproteinases of Streptococcus pneumoniae have a different impact on virulence in mice.</title>
        <authorList>
            <person name="Chiavolini D."/>
            <person name="Memmi G."/>
            <person name="Maggi T."/>
            <person name="Iannelli F."/>
            <person name="Pozzi G."/>
            <person name="Oggioni M.R."/>
        </authorList>
    </citation>
    <scope>ROLE IN VIRULENCE</scope>
    <source>
        <strain>ATCC BAA-334 / TIGR4</strain>
    </source>
</reference>
<reference key="5">
    <citation type="journal article" date="2003" name="Infect. Immun.">
        <title>ZmpB, a novel virulence factor of Streptococcus pneumoniae that induces tumor necrosis factor alpha production in the respiratory tract.</title>
        <authorList>
            <person name="Blue C.E."/>
            <person name="Paterson G.K."/>
            <person name="Kerr A.R."/>
            <person name="Berge M."/>
            <person name="Claverys J.-P."/>
            <person name="Mitchell T.J."/>
        </authorList>
    </citation>
    <scope>ROLE IN INFLAMMATION</scope>
    <source>
        <strain>Serotype 2</strain>
    </source>
</reference>